<gene>
    <name evidence="1" type="primary">pyrD</name>
    <name type="ordered locus">AnaeK_2566</name>
</gene>
<reference key="1">
    <citation type="submission" date="2008-08" db="EMBL/GenBank/DDBJ databases">
        <title>Complete sequence of Anaeromyxobacter sp. K.</title>
        <authorList>
            <consortium name="US DOE Joint Genome Institute"/>
            <person name="Lucas S."/>
            <person name="Copeland A."/>
            <person name="Lapidus A."/>
            <person name="Glavina del Rio T."/>
            <person name="Dalin E."/>
            <person name="Tice H."/>
            <person name="Bruce D."/>
            <person name="Goodwin L."/>
            <person name="Pitluck S."/>
            <person name="Saunders E."/>
            <person name="Brettin T."/>
            <person name="Detter J.C."/>
            <person name="Han C."/>
            <person name="Larimer F."/>
            <person name="Land M."/>
            <person name="Hauser L."/>
            <person name="Kyrpides N."/>
            <person name="Ovchinnikiva G."/>
            <person name="Beliaev A."/>
        </authorList>
    </citation>
    <scope>NUCLEOTIDE SEQUENCE [LARGE SCALE GENOMIC DNA]</scope>
    <source>
        <strain>K</strain>
    </source>
</reference>
<keyword id="KW-1003">Cell membrane</keyword>
<keyword id="KW-0285">Flavoprotein</keyword>
<keyword id="KW-0288">FMN</keyword>
<keyword id="KW-0472">Membrane</keyword>
<keyword id="KW-0560">Oxidoreductase</keyword>
<keyword id="KW-0665">Pyrimidine biosynthesis</keyword>
<evidence type="ECO:0000255" key="1">
    <source>
        <dbReference type="HAMAP-Rule" id="MF_00225"/>
    </source>
</evidence>
<dbReference type="EC" id="1.3.5.2" evidence="1"/>
<dbReference type="EMBL" id="CP001131">
    <property type="protein sequence ID" value="ACG73791.1"/>
    <property type="molecule type" value="Genomic_DNA"/>
</dbReference>
<dbReference type="RefSeq" id="WP_012526575.1">
    <property type="nucleotide sequence ID" value="NC_011145.1"/>
</dbReference>
<dbReference type="SMR" id="B4UG99"/>
<dbReference type="KEGG" id="ank:AnaeK_2566"/>
<dbReference type="HOGENOM" id="CLU_013640_2_0_7"/>
<dbReference type="OrthoDB" id="9802377at2"/>
<dbReference type="UniPathway" id="UPA00070">
    <property type="reaction ID" value="UER00946"/>
</dbReference>
<dbReference type="Proteomes" id="UP000001871">
    <property type="component" value="Chromosome"/>
</dbReference>
<dbReference type="GO" id="GO:0005737">
    <property type="term" value="C:cytoplasm"/>
    <property type="evidence" value="ECO:0007669"/>
    <property type="project" value="InterPro"/>
</dbReference>
<dbReference type="GO" id="GO:0005886">
    <property type="term" value="C:plasma membrane"/>
    <property type="evidence" value="ECO:0007669"/>
    <property type="project" value="UniProtKB-SubCell"/>
</dbReference>
<dbReference type="GO" id="GO:0106430">
    <property type="term" value="F:dihydroorotate dehydrogenase (quinone) activity"/>
    <property type="evidence" value="ECO:0007669"/>
    <property type="project" value="UniProtKB-EC"/>
</dbReference>
<dbReference type="GO" id="GO:0006207">
    <property type="term" value="P:'de novo' pyrimidine nucleobase biosynthetic process"/>
    <property type="evidence" value="ECO:0007669"/>
    <property type="project" value="InterPro"/>
</dbReference>
<dbReference type="GO" id="GO:0044205">
    <property type="term" value="P:'de novo' UMP biosynthetic process"/>
    <property type="evidence" value="ECO:0007669"/>
    <property type="project" value="UniProtKB-UniRule"/>
</dbReference>
<dbReference type="CDD" id="cd04738">
    <property type="entry name" value="DHOD_2_like"/>
    <property type="match status" value="1"/>
</dbReference>
<dbReference type="Gene3D" id="3.20.20.70">
    <property type="entry name" value="Aldolase class I"/>
    <property type="match status" value="1"/>
</dbReference>
<dbReference type="HAMAP" id="MF_00225">
    <property type="entry name" value="DHO_dh_type2"/>
    <property type="match status" value="1"/>
</dbReference>
<dbReference type="InterPro" id="IPR013785">
    <property type="entry name" value="Aldolase_TIM"/>
</dbReference>
<dbReference type="InterPro" id="IPR050074">
    <property type="entry name" value="DHO_dehydrogenase"/>
</dbReference>
<dbReference type="InterPro" id="IPR005719">
    <property type="entry name" value="Dihydroorotate_DH_2"/>
</dbReference>
<dbReference type="InterPro" id="IPR005720">
    <property type="entry name" value="Dihydroorotate_DH_cat"/>
</dbReference>
<dbReference type="InterPro" id="IPR001295">
    <property type="entry name" value="Dihydroorotate_DH_CS"/>
</dbReference>
<dbReference type="NCBIfam" id="NF003645">
    <property type="entry name" value="PRK05286.1-2"/>
    <property type="match status" value="1"/>
</dbReference>
<dbReference type="NCBIfam" id="NF003652">
    <property type="entry name" value="PRK05286.2-5"/>
    <property type="match status" value="1"/>
</dbReference>
<dbReference type="NCBIfam" id="TIGR01036">
    <property type="entry name" value="pyrD_sub2"/>
    <property type="match status" value="1"/>
</dbReference>
<dbReference type="PANTHER" id="PTHR48109:SF4">
    <property type="entry name" value="DIHYDROOROTATE DEHYDROGENASE (QUINONE), MITOCHONDRIAL"/>
    <property type="match status" value="1"/>
</dbReference>
<dbReference type="PANTHER" id="PTHR48109">
    <property type="entry name" value="DIHYDROOROTATE DEHYDROGENASE (QUINONE), MITOCHONDRIAL-RELATED"/>
    <property type="match status" value="1"/>
</dbReference>
<dbReference type="Pfam" id="PF01180">
    <property type="entry name" value="DHO_dh"/>
    <property type="match status" value="1"/>
</dbReference>
<dbReference type="SUPFAM" id="SSF51395">
    <property type="entry name" value="FMN-linked oxidoreductases"/>
    <property type="match status" value="1"/>
</dbReference>
<dbReference type="PROSITE" id="PS00911">
    <property type="entry name" value="DHODEHASE_1"/>
    <property type="match status" value="1"/>
</dbReference>
<dbReference type="PROSITE" id="PS00912">
    <property type="entry name" value="DHODEHASE_2"/>
    <property type="match status" value="1"/>
</dbReference>
<protein>
    <recommendedName>
        <fullName evidence="1">Dihydroorotate dehydrogenase (quinone)</fullName>
        <ecNumber evidence="1">1.3.5.2</ecNumber>
    </recommendedName>
    <alternativeName>
        <fullName evidence="1">DHOdehase</fullName>
        <shortName evidence="1">DHOD</shortName>
        <shortName evidence="1">DHODase</shortName>
    </alternativeName>
    <alternativeName>
        <fullName evidence="1">Dihydroorotate oxidase</fullName>
    </alternativeName>
</protein>
<feature type="chain" id="PRO_1000100247" description="Dihydroorotate dehydrogenase (quinone)">
    <location>
        <begin position="1"/>
        <end position="364"/>
    </location>
</feature>
<feature type="active site" description="Nucleophile" evidence="1">
    <location>
        <position position="178"/>
    </location>
</feature>
<feature type="binding site" evidence="1">
    <location>
        <begin position="62"/>
        <end position="66"/>
    </location>
    <ligand>
        <name>FMN</name>
        <dbReference type="ChEBI" id="CHEBI:58210"/>
    </ligand>
</feature>
<feature type="binding site" evidence="1">
    <location>
        <position position="66"/>
    </location>
    <ligand>
        <name>substrate</name>
    </ligand>
</feature>
<feature type="binding site" evidence="1">
    <location>
        <position position="86"/>
    </location>
    <ligand>
        <name>FMN</name>
        <dbReference type="ChEBI" id="CHEBI:58210"/>
    </ligand>
</feature>
<feature type="binding site" evidence="1">
    <location>
        <begin position="111"/>
        <end position="115"/>
    </location>
    <ligand>
        <name>substrate</name>
    </ligand>
</feature>
<feature type="binding site" evidence="1">
    <location>
        <position position="142"/>
    </location>
    <ligand>
        <name>FMN</name>
        <dbReference type="ChEBI" id="CHEBI:58210"/>
    </ligand>
</feature>
<feature type="binding site" evidence="1">
    <location>
        <position position="175"/>
    </location>
    <ligand>
        <name>FMN</name>
        <dbReference type="ChEBI" id="CHEBI:58210"/>
    </ligand>
</feature>
<feature type="binding site" evidence="1">
    <location>
        <position position="175"/>
    </location>
    <ligand>
        <name>substrate</name>
    </ligand>
</feature>
<feature type="binding site" evidence="1">
    <location>
        <position position="180"/>
    </location>
    <ligand>
        <name>substrate</name>
    </ligand>
</feature>
<feature type="binding site" evidence="1">
    <location>
        <position position="216"/>
    </location>
    <ligand>
        <name>FMN</name>
        <dbReference type="ChEBI" id="CHEBI:58210"/>
    </ligand>
</feature>
<feature type="binding site" evidence="1">
    <location>
        <position position="244"/>
    </location>
    <ligand>
        <name>FMN</name>
        <dbReference type="ChEBI" id="CHEBI:58210"/>
    </ligand>
</feature>
<feature type="binding site" evidence="1">
    <location>
        <begin position="245"/>
        <end position="246"/>
    </location>
    <ligand>
        <name>substrate</name>
    </ligand>
</feature>
<feature type="binding site" evidence="1">
    <location>
        <position position="267"/>
    </location>
    <ligand>
        <name>FMN</name>
        <dbReference type="ChEBI" id="CHEBI:58210"/>
    </ligand>
</feature>
<feature type="binding site" evidence="1">
    <location>
        <position position="296"/>
    </location>
    <ligand>
        <name>FMN</name>
        <dbReference type="ChEBI" id="CHEBI:58210"/>
    </ligand>
</feature>
<feature type="binding site" evidence="1">
    <location>
        <begin position="317"/>
        <end position="318"/>
    </location>
    <ligand>
        <name>FMN</name>
        <dbReference type="ChEBI" id="CHEBI:58210"/>
    </ligand>
</feature>
<sequence length="364" mass="38458">MLWPALRSVLFQLDPERVHHLAHWALHRVPLAVARARRPAPIPALAVRCMGLDFDGPVGLAAGFDKGDVALPGLFGLGFSHVEIGTITPRPQPGNDRPRLFRLPEHRALLNRMGFNNEGMEACARRLAALPPAARLGPVGINVGKNKVTPNEDAAADYLACIERLHPYADYLVVNISSPNTPGLRQLQERDALDRLLRACVRHLAERAPGKPLLVKLAPDLSPEALDEAVDVAIAAGAAGIVATNTTLSRAGVERHPRAAEAGGLSGAPLERLATDVVRRCYARAAGRVPIVGVGGVMDAEGAYAKIRAGATLVQAYTGLIYGGPGFVGRVNAGLARLLERDEFSTLSDAIGADHRQGGGKAAG</sequence>
<accession>B4UG99</accession>
<proteinExistence type="inferred from homology"/>
<name>PYRD_ANASK</name>
<comment type="function">
    <text evidence="1">Catalyzes the conversion of dihydroorotate to orotate with quinone as electron acceptor.</text>
</comment>
<comment type="catalytic activity">
    <reaction evidence="1">
        <text>(S)-dihydroorotate + a quinone = orotate + a quinol</text>
        <dbReference type="Rhea" id="RHEA:30187"/>
        <dbReference type="ChEBI" id="CHEBI:24646"/>
        <dbReference type="ChEBI" id="CHEBI:30839"/>
        <dbReference type="ChEBI" id="CHEBI:30864"/>
        <dbReference type="ChEBI" id="CHEBI:132124"/>
        <dbReference type="EC" id="1.3.5.2"/>
    </reaction>
</comment>
<comment type="cofactor">
    <cofactor evidence="1">
        <name>FMN</name>
        <dbReference type="ChEBI" id="CHEBI:58210"/>
    </cofactor>
    <text evidence="1">Binds 1 FMN per subunit.</text>
</comment>
<comment type="pathway">
    <text evidence="1">Pyrimidine metabolism; UMP biosynthesis via de novo pathway; orotate from (S)-dihydroorotate (quinone route): step 1/1.</text>
</comment>
<comment type="subunit">
    <text evidence="1">Monomer.</text>
</comment>
<comment type="subcellular location">
    <subcellularLocation>
        <location evidence="1">Cell membrane</location>
        <topology evidence="1">Peripheral membrane protein</topology>
    </subcellularLocation>
</comment>
<comment type="similarity">
    <text evidence="1">Belongs to the dihydroorotate dehydrogenase family. Type 2 subfamily.</text>
</comment>
<organism>
    <name type="scientific">Anaeromyxobacter sp. (strain K)</name>
    <dbReference type="NCBI Taxonomy" id="447217"/>
    <lineage>
        <taxon>Bacteria</taxon>
        <taxon>Pseudomonadati</taxon>
        <taxon>Myxococcota</taxon>
        <taxon>Myxococcia</taxon>
        <taxon>Myxococcales</taxon>
        <taxon>Cystobacterineae</taxon>
        <taxon>Anaeromyxobacteraceae</taxon>
        <taxon>Anaeromyxobacter</taxon>
    </lineage>
</organism>